<sequence>MSWTASVFLRTSTTSMKFLRLRWPLPRIPQNKSANVAPRFRSKSAVSQLSSGFKFVQIRKSTCDSNEMTIKAIKARQIYDSRGNPTVEVDLTTELGLFRAAVPSGASTGVHEALELRDNDKANYHGKSVLKAVGHVNDTLGPELIKANLDVVDQASIDNFMIKLDGTENKSKFGANAILGVSLAVAKAGAAKKGVPLYKHIADLAGNKEIILPVPAFNVINGGSHAGNKLAMQEFMILPTGATSFTEAMKMGSEVYHHLKNVIKAKFGLDATAVGDEGGFAPNIQSNKEALNLISDAIAKAGYTGKIEIGMDVAASEFYKDGQYDLDFKNEKSDKSQWLPADKLANLYQEFIKDFPIVSIEDPFDQDHWEAWSNLTGCTDIQIVGDDLTVTNPKRIATAVEKKACNCLLLKVNQIGTVTESIAAHLLAKKNGWGTMVSHRSGETEDSFIGDLVVGLSTGQIKTGAPCRSERLAKYNQILRIEEEIGAGVKFAGKSFRKPQ</sequence>
<dbReference type="EC" id="4.2.1.11"/>
<dbReference type="EMBL" id="X17034">
    <property type="protein sequence ID" value="CAA34895.1"/>
    <property type="molecule type" value="Genomic_DNA"/>
</dbReference>
<dbReference type="EMBL" id="AE014134">
    <property type="protein sequence ID" value="AAF51344.2"/>
    <property type="molecule type" value="Genomic_DNA"/>
</dbReference>
<dbReference type="EMBL" id="AE014134">
    <property type="protein sequence ID" value="AAN10455.1"/>
    <property type="molecule type" value="Genomic_DNA"/>
</dbReference>
<dbReference type="EMBL" id="AE014134">
    <property type="protein sequence ID" value="AAN10456.1"/>
    <property type="molecule type" value="Genomic_DNA"/>
</dbReference>
<dbReference type="EMBL" id="AE014134">
    <property type="protein sequence ID" value="AAN10457.1"/>
    <property type="molecule type" value="Genomic_DNA"/>
</dbReference>
<dbReference type="EMBL" id="AE014134">
    <property type="protein sequence ID" value="AAN10458.1"/>
    <property type="molecule type" value="Genomic_DNA"/>
</dbReference>
<dbReference type="EMBL" id="AY118449">
    <property type="protein sequence ID" value="AAM48478.1"/>
    <property type="molecule type" value="mRNA"/>
</dbReference>
<dbReference type="EMBL" id="BT014924">
    <property type="protein sequence ID" value="AAT47775.1"/>
    <property type="molecule type" value="mRNA"/>
</dbReference>
<dbReference type="EMBL" id="BT058002">
    <property type="protein sequence ID" value="ACM16712.1"/>
    <property type="molecule type" value="mRNA"/>
</dbReference>
<dbReference type="EMBL" id="BT072929">
    <property type="protein sequence ID" value="ACN86077.1"/>
    <property type="molecule type" value="mRNA"/>
</dbReference>
<dbReference type="EMBL" id="DQ864190">
    <property type="protein sequence ID" value="ABH06825.1"/>
    <property type="molecule type" value="Genomic_DNA"/>
</dbReference>
<dbReference type="EMBL" id="DQ864191">
    <property type="protein sequence ID" value="ABH06826.1"/>
    <property type="molecule type" value="Genomic_DNA"/>
</dbReference>
<dbReference type="EMBL" id="DQ864192">
    <property type="protein sequence ID" value="ABH06827.1"/>
    <property type="molecule type" value="Genomic_DNA"/>
</dbReference>
<dbReference type="EMBL" id="DQ864193">
    <property type="protein sequence ID" value="ABH06828.1"/>
    <property type="molecule type" value="Genomic_DNA"/>
</dbReference>
<dbReference type="EMBL" id="DQ864194">
    <property type="protein sequence ID" value="ABH06829.1"/>
    <property type="molecule type" value="Genomic_DNA"/>
</dbReference>
<dbReference type="EMBL" id="DQ864195">
    <property type="protein sequence ID" value="ABH06830.1"/>
    <property type="molecule type" value="Genomic_DNA"/>
</dbReference>
<dbReference type="EMBL" id="DQ864196">
    <property type="protein sequence ID" value="ABH06831.1"/>
    <property type="molecule type" value="Genomic_DNA"/>
</dbReference>
<dbReference type="EMBL" id="DQ864197">
    <property type="protein sequence ID" value="ABH06832.1"/>
    <property type="molecule type" value="Genomic_DNA"/>
</dbReference>
<dbReference type="EMBL" id="DQ864198">
    <property type="protein sequence ID" value="ABH06833.1"/>
    <property type="molecule type" value="Genomic_DNA"/>
</dbReference>
<dbReference type="EMBL" id="DQ864199">
    <property type="protein sequence ID" value="ABH06834.1"/>
    <property type="molecule type" value="Genomic_DNA"/>
</dbReference>
<dbReference type="EMBL" id="DQ864200">
    <property type="protein sequence ID" value="ABH06835.1"/>
    <property type="molecule type" value="Genomic_DNA"/>
</dbReference>
<dbReference type="EMBL" id="DQ864201">
    <property type="protein sequence ID" value="ABH06836.1"/>
    <property type="molecule type" value="Genomic_DNA"/>
</dbReference>
<dbReference type="EMBL" id="DQ864202">
    <property type="protein sequence ID" value="ABH06837.1"/>
    <property type="molecule type" value="Genomic_DNA"/>
</dbReference>
<dbReference type="EMBL" id="DQ864203">
    <property type="protein sequence ID" value="ABH06838.1"/>
    <property type="molecule type" value="Genomic_DNA"/>
</dbReference>
<dbReference type="EMBL" id="DQ864204">
    <property type="protein sequence ID" value="ABH06839.1"/>
    <property type="molecule type" value="Genomic_DNA"/>
</dbReference>
<dbReference type="EMBL" id="DQ864205">
    <property type="protein sequence ID" value="ABH06840.1"/>
    <property type="molecule type" value="Genomic_DNA"/>
</dbReference>
<dbReference type="EMBL" id="DQ864206">
    <property type="protein sequence ID" value="ABH06841.1"/>
    <property type="molecule type" value="Genomic_DNA"/>
</dbReference>
<dbReference type="EMBL" id="DQ864207">
    <property type="protein sequence ID" value="ABH06842.1"/>
    <property type="molecule type" value="Genomic_DNA"/>
</dbReference>
<dbReference type="EMBL" id="DQ864208">
    <property type="protein sequence ID" value="ABH06843.1"/>
    <property type="molecule type" value="Genomic_DNA"/>
</dbReference>
<dbReference type="EMBL" id="DQ864209">
    <property type="protein sequence ID" value="ABH06844.1"/>
    <property type="molecule type" value="Genomic_DNA"/>
</dbReference>
<dbReference type="EMBL" id="DQ864210">
    <property type="protein sequence ID" value="ABH06845.1"/>
    <property type="molecule type" value="Genomic_DNA"/>
</dbReference>
<dbReference type="EMBL" id="DQ864211">
    <property type="protein sequence ID" value="ABH06846.1"/>
    <property type="molecule type" value="Genomic_DNA"/>
</dbReference>
<dbReference type="EMBL" id="DQ864212">
    <property type="protein sequence ID" value="ABH06847.1"/>
    <property type="molecule type" value="Genomic_DNA"/>
</dbReference>
<dbReference type="EMBL" id="DQ864213">
    <property type="protein sequence ID" value="ABH06848.1"/>
    <property type="molecule type" value="Genomic_DNA"/>
</dbReference>
<dbReference type="PIR" id="S07586">
    <property type="entry name" value="S07586"/>
</dbReference>
<dbReference type="RefSeq" id="NP_001162853.1">
    <molecule id="P15007-2"/>
    <property type="nucleotide sequence ID" value="NM_001169382.2"/>
</dbReference>
<dbReference type="RefSeq" id="NP_477421.1">
    <molecule id="P15007-2"/>
    <property type="nucleotide sequence ID" value="NM_058073.5"/>
</dbReference>
<dbReference type="RefSeq" id="NP_722721.1">
    <molecule id="P15007-1"/>
    <property type="nucleotide sequence ID" value="NM_164431.3"/>
</dbReference>
<dbReference type="RefSeq" id="NP_722722.1">
    <molecule id="P15007-1"/>
    <property type="nucleotide sequence ID" value="NM_164432.3"/>
</dbReference>
<dbReference type="RefSeq" id="NP_722723.1">
    <molecule id="P15007-1"/>
    <property type="nucleotide sequence ID" value="NM_164433.3"/>
</dbReference>
<dbReference type="RefSeq" id="NP_722724.1">
    <molecule id="P15007-1"/>
    <property type="nucleotide sequence ID" value="NM_164434.3"/>
</dbReference>
<dbReference type="PDB" id="5WRO">
    <property type="method" value="X-ray"/>
    <property type="resolution" value="2.02 A"/>
    <property type="chains" value="A=69-500"/>
</dbReference>
<dbReference type="PDBsum" id="5WRO"/>
<dbReference type="SMR" id="P15007"/>
<dbReference type="BioGRID" id="59591">
    <property type="interactions" value="96"/>
</dbReference>
<dbReference type="FunCoup" id="P15007">
    <property type="interactions" value="843"/>
</dbReference>
<dbReference type="IntAct" id="P15007">
    <property type="interactions" value="184"/>
</dbReference>
<dbReference type="STRING" id="7227.FBpp0077572"/>
<dbReference type="PaxDb" id="7227-FBpp0077572"/>
<dbReference type="DNASU" id="33351"/>
<dbReference type="EnsemblMetazoa" id="FBtr0077905">
    <molecule id="P15007-1"/>
    <property type="protein sequence ID" value="FBpp0077571"/>
    <property type="gene ID" value="FBgn0000579"/>
</dbReference>
<dbReference type="EnsemblMetazoa" id="FBtr0077906">
    <molecule id="P15007-1"/>
    <property type="protein sequence ID" value="FBpp0077572"/>
    <property type="gene ID" value="FBgn0000579"/>
</dbReference>
<dbReference type="EnsemblMetazoa" id="FBtr0077907">
    <molecule id="P15007-1"/>
    <property type="protein sequence ID" value="FBpp0077573"/>
    <property type="gene ID" value="FBgn0000579"/>
</dbReference>
<dbReference type="EnsemblMetazoa" id="FBtr0077908">
    <molecule id="P15007-1"/>
    <property type="protein sequence ID" value="FBpp0077574"/>
    <property type="gene ID" value="FBgn0000579"/>
</dbReference>
<dbReference type="EnsemblMetazoa" id="FBtr0077909">
    <molecule id="P15007-2"/>
    <property type="protein sequence ID" value="FBpp0077575"/>
    <property type="gene ID" value="FBgn0000579"/>
</dbReference>
<dbReference type="EnsemblMetazoa" id="FBtr0302115">
    <molecule id="P15007-2"/>
    <property type="protein sequence ID" value="FBpp0291325"/>
    <property type="gene ID" value="FBgn0000579"/>
</dbReference>
<dbReference type="GeneID" id="33351"/>
<dbReference type="KEGG" id="dme:Dmel_CG17654"/>
<dbReference type="AGR" id="FB:FBgn0000579"/>
<dbReference type="CTD" id="33351"/>
<dbReference type="FlyBase" id="FBgn0000579">
    <property type="gene designation" value="Eno"/>
</dbReference>
<dbReference type="VEuPathDB" id="VectorBase:FBgn0000579"/>
<dbReference type="eggNOG" id="KOG2670">
    <property type="taxonomic scope" value="Eukaryota"/>
</dbReference>
<dbReference type="GeneTree" id="ENSGT00950000182805"/>
<dbReference type="InParanoid" id="P15007"/>
<dbReference type="OMA" id="RCMMSHR"/>
<dbReference type="OrthoDB" id="1739814at2759"/>
<dbReference type="PhylomeDB" id="P15007"/>
<dbReference type="BRENDA" id="4.2.1.11">
    <property type="organism ID" value="1994"/>
</dbReference>
<dbReference type="Reactome" id="R-DME-70171">
    <property type="pathway name" value="Glycolysis"/>
</dbReference>
<dbReference type="Reactome" id="R-DME-70263">
    <property type="pathway name" value="Gluconeogenesis"/>
</dbReference>
<dbReference type="UniPathway" id="UPA00109">
    <property type="reaction ID" value="UER00187"/>
</dbReference>
<dbReference type="BioGRID-ORCS" id="33351">
    <property type="hits" value="1 hit in 3 CRISPR screens"/>
</dbReference>
<dbReference type="ChiTaRS" id="Eno">
    <property type="organism name" value="fly"/>
</dbReference>
<dbReference type="GenomeRNAi" id="33351"/>
<dbReference type="PRO" id="PR:P15007"/>
<dbReference type="Proteomes" id="UP000000803">
    <property type="component" value="Chromosome 2L"/>
</dbReference>
<dbReference type="Bgee" id="FBgn0000579">
    <property type="expression patterns" value="Expressed in ensheathing neuropil associated glial cell (Drosophila) in brain and 277 other cell types or tissues"/>
</dbReference>
<dbReference type="ExpressionAtlas" id="P15007">
    <property type="expression patterns" value="baseline and differential"/>
</dbReference>
<dbReference type="GO" id="GO:0005737">
    <property type="term" value="C:cytoplasm"/>
    <property type="evidence" value="ECO:0007005"/>
    <property type="project" value="FlyBase"/>
</dbReference>
<dbReference type="GO" id="GO:0005829">
    <property type="term" value="C:cytosol"/>
    <property type="evidence" value="ECO:0000250"/>
    <property type="project" value="FlyBase"/>
</dbReference>
<dbReference type="GO" id="GO:0000015">
    <property type="term" value="C:phosphopyruvate hydratase complex"/>
    <property type="evidence" value="ECO:0000250"/>
    <property type="project" value="FlyBase"/>
</dbReference>
<dbReference type="GO" id="GO:0005886">
    <property type="term" value="C:plasma membrane"/>
    <property type="evidence" value="ECO:0007005"/>
    <property type="project" value="FlyBase"/>
</dbReference>
<dbReference type="GO" id="GO:0000287">
    <property type="term" value="F:magnesium ion binding"/>
    <property type="evidence" value="ECO:0007669"/>
    <property type="project" value="InterPro"/>
</dbReference>
<dbReference type="GO" id="GO:0004634">
    <property type="term" value="F:phosphopyruvate hydratase activity"/>
    <property type="evidence" value="ECO:0000250"/>
    <property type="project" value="FlyBase"/>
</dbReference>
<dbReference type="GO" id="GO:0061621">
    <property type="term" value="P:canonical glycolysis"/>
    <property type="evidence" value="ECO:0000250"/>
    <property type="project" value="FlyBase"/>
</dbReference>
<dbReference type="GO" id="GO:0006094">
    <property type="term" value="P:gluconeogenesis"/>
    <property type="evidence" value="ECO:0000250"/>
    <property type="project" value="FlyBase"/>
</dbReference>
<dbReference type="GO" id="GO:0042593">
    <property type="term" value="P:glucose homeostasis"/>
    <property type="evidence" value="ECO:0000315"/>
    <property type="project" value="FlyBase"/>
</dbReference>
<dbReference type="GO" id="GO:0006096">
    <property type="term" value="P:glycolytic process"/>
    <property type="evidence" value="ECO:0000318"/>
    <property type="project" value="GO_Central"/>
</dbReference>
<dbReference type="CDD" id="cd03313">
    <property type="entry name" value="enolase"/>
    <property type="match status" value="1"/>
</dbReference>
<dbReference type="FunFam" id="3.30.390.10:FF:000001">
    <property type="entry name" value="Enolase"/>
    <property type="match status" value="1"/>
</dbReference>
<dbReference type="FunFam" id="3.20.20.120:FF:000002">
    <property type="entry name" value="Enolase 1"/>
    <property type="match status" value="1"/>
</dbReference>
<dbReference type="Gene3D" id="3.20.20.120">
    <property type="entry name" value="Enolase-like C-terminal domain"/>
    <property type="match status" value="1"/>
</dbReference>
<dbReference type="Gene3D" id="3.30.390.10">
    <property type="entry name" value="Enolase-like, N-terminal domain"/>
    <property type="match status" value="1"/>
</dbReference>
<dbReference type="HAMAP" id="MF_00318">
    <property type="entry name" value="Enolase"/>
    <property type="match status" value="1"/>
</dbReference>
<dbReference type="InterPro" id="IPR000941">
    <property type="entry name" value="Enolase"/>
</dbReference>
<dbReference type="InterPro" id="IPR036849">
    <property type="entry name" value="Enolase-like_C_sf"/>
</dbReference>
<dbReference type="InterPro" id="IPR029017">
    <property type="entry name" value="Enolase-like_N"/>
</dbReference>
<dbReference type="InterPro" id="IPR020810">
    <property type="entry name" value="Enolase_C"/>
</dbReference>
<dbReference type="InterPro" id="IPR020809">
    <property type="entry name" value="Enolase_CS"/>
</dbReference>
<dbReference type="InterPro" id="IPR020811">
    <property type="entry name" value="Enolase_N"/>
</dbReference>
<dbReference type="NCBIfam" id="TIGR01060">
    <property type="entry name" value="eno"/>
    <property type="match status" value="1"/>
</dbReference>
<dbReference type="PANTHER" id="PTHR11902">
    <property type="entry name" value="ENOLASE"/>
    <property type="match status" value="1"/>
</dbReference>
<dbReference type="PANTHER" id="PTHR11902:SF1">
    <property type="entry name" value="ENOLASE"/>
    <property type="match status" value="1"/>
</dbReference>
<dbReference type="Pfam" id="PF00113">
    <property type="entry name" value="Enolase_C"/>
    <property type="match status" value="1"/>
</dbReference>
<dbReference type="Pfam" id="PF03952">
    <property type="entry name" value="Enolase_N"/>
    <property type="match status" value="1"/>
</dbReference>
<dbReference type="PRINTS" id="PR00148">
    <property type="entry name" value="ENOLASE"/>
</dbReference>
<dbReference type="SFLD" id="SFLDS00001">
    <property type="entry name" value="Enolase"/>
    <property type="match status" value="1"/>
</dbReference>
<dbReference type="SFLD" id="SFLDF00002">
    <property type="entry name" value="enolase"/>
    <property type="match status" value="1"/>
</dbReference>
<dbReference type="SMART" id="SM01192">
    <property type="entry name" value="Enolase_C"/>
    <property type="match status" value="1"/>
</dbReference>
<dbReference type="SMART" id="SM01193">
    <property type="entry name" value="Enolase_N"/>
    <property type="match status" value="1"/>
</dbReference>
<dbReference type="SUPFAM" id="SSF51604">
    <property type="entry name" value="Enolase C-terminal domain-like"/>
    <property type="match status" value="1"/>
</dbReference>
<dbReference type="SUPFAM" id="SSF54826">
    <property type="entry name" value="Enolase N-terminal domain-like"/>
    <property type="match status" value="1"/>
</dbReference>
<dbReference type="PROSITE" id="PS00164">
    <property type="entry name" value="ENOLASE"/>
    <property type="match status" value="1"/>
</dbReference>
<gene>
    <name evidence="8" type="primary">Eno</name>
    <name evidence="8" type="ORF">CG17654</name>
</gene>
<reference key="1">
    <citation type="journal article" date="1990" name="Nucleic Acids Res.">
        <title>The nucleotide sequence of a Drosophila melanogaster enolase gene.</title>
        <authorList>
            <person name="Bishop J.G. III"/>
            <person name="Corces V.G."/>
        </authorList>
    </citation>
    <scope>NUCLEOTIDE SEQUENCE [GENOMIC DNA] (ISOFORM A)</scope>
    <source>
        <strain>Canton-S</strain>
    </source>
</reference>
<reference key="2">
    <citation type="journal article" date="2000" name="Science">
        <title>The genome sequence of Drosophila melanogaster.</title>
        <authorList>
            <person name="Adams M.D."/>
            <person name="Celniker S.E."/>
            <person name="Holt R.A."/>
            <person name="Evans C.A."/>
            <person name="Gocayne J.D."/>
            <person name="Amanatides P.G."/>
            <person name="Scherer S.E."/>
            <person name="Li P.W."/>
            <person name="Hoskins R.A."/>
            <person name="Galle R.F."/>
            <person name="George R.A."/>
            <person name="Lewis S.E."/>
            <person name="Richards S."/>
            <person name="Ashburner M."/>
            <person name="Henderson S.N."/>
            <person name="Sutton G.G."/>
            <person name="Wortman J.R."/>
            <person name="Yandell M.D."/>
            <person name="Zhang Q."/>
            <person name="Chen L.X."/>
            <person name="Brandon R.C."/>
            <person name="Rogers Y.-H.C."/>
            <person name="Blazej R.G."/>
            <person name="Champe M."/>
            <person name="Pfeiffer B.D."/>
            <person name="Wan K.H."/>
            <person name="Doyle C."/>
            <person name="Baxter E.G."/>
            <person name="Helt G."/>
            <person name="Nelson C.R."/>
            <person name="Miklos G.L.G."/>
            <person name="Abril J.F."/>
            <person name="Agbayani A."/>
            <person name="An H.-J."/>
            <person name="Andrews-Pfannkoch C."/>
            <person name="Baldwin D."/>
            <person name="Ballew R.M."/>
            <person name="Basu A."/>
            <person name="Baxendale J."/>
            <person name="Bayraktaroglu L."/>
            <person name="Beasley E.M."/>
            <person name="Beeson K.Y."/>
            <person name="Benos P.V."/>
            <person name="Berman B.P."/>
            <person name="Bhandari D."/>
            <person name="Bolshakov S."/>
            <person name="Borkova D."/>
            <person name="Botchan M.R."/>
            <person name="Bouck J."/>
            <person name="Brokstein P."/>
            <person name="Brottier P."/>
            <person name="Burtis K.C."/>
            <person name="Busam D.A."/>
            <person name="Butler H."/>
            <person name="Cadieu E."/>
            <person name="Center A."/>
            <person name="Chandra I."/>
            <person name="Cherry J.M."/>
            <person name="Cawley S."/>
            <person name="Dahlke C."/>
            <person name="Davenport L.B."/>
            <person name="Davies P."/>
            <person name="de Pablos B."/>
            <person name="Delcher A."/>
            <person name="Deng Z."/>
            <person name="Mays A.D."/>
            <person name="Dew I."/>
            <person name="Dietz S.M."/>
            <person name="Dodson K."/>
            <person name="Doup L.E."/>
            <person name="Downes M."/>
            <person name="Dugan-Rocha S."/>
            <person name="Dunkov B.C."/>
            <person name="Dunn P."/>
            <person name="Durbin K.J."/>
            <person name="Evangelista C.C."/>
            <person name="Ferraz C."/>
            <person name="Ferriera S."/>
            <person name="Fleischmann W."/>
            <person name="Fosler C."/>
            <person name="Gabrielian A.E."/>
            <person name="Garg N.S."/>
            <person name="Gelbart W.M."/>
            <person name="Glasser K."/>
            <person name="Glodek A."/>
            <person name="Gong F."/>
            <person name="Gorrell J.H."/>
            <person name="Gu Z."/>
            <person name="Guan P."/>
            <person name="Harris M."/>
            <person name="Harris N.L."/>
            <person name="Harvey D.A."/>
            <person name="Heiman T.J."/>
            <person name="Hernandez J.R."/>
            <person name="Houck J."/>
            <person name="Hostin D."/>
            <person name="Houston K.A."/>
            <person name="Howland T.J."/>
            <person name="Wei M.-H."/>
            <person name="Ibegwam C."/>
            <person name="Jalali M."/>
            <person name="Kalush F."/>
            <person name="Karpen G.H."/>
            <person name="Ke Z."/>
            <person name="Kennison J.A."/>
            <person name="Ketchum K.A."/>
            <person name="Kimmel B.E."/>
            <person name="Kodira C.D."/>
            <person name="Kraft C.L."/>
            <person name="Kravitz S."/>
            <person name="Kulp D."/>
            <person name="Lai Z."/>
            <person name="Lasko P."/>
            <person name="Lei Y."/>
            <person name="Levitsky A.A."/>
            <person name="Li J.H."/>
            <person name="Li Z."/>
            <person name="Liang Y."/>
            <person name="Lin X."/>
            <person name="Liu X."/>
            <person name="Mattei B."/>
            <person name="McIntosh T.C."/>
            <person name="McLeod M.P."/>
            <person name="McPherson D."/>
            <person name="Merkulov G."/>
            <person name="Milshina N.V."/>
            <person name="Mobarry C."/>
            <person name="Morris J."/>
            <person name="Moshrefi A."/>
            <person name="Mount S.M."/>
            <person name="Moy M."/>
            <person name="Murphy B."/>
            <person name="Murphy L."/>
            <person name="Muzny D.M."/>
            <person name="Nelson D.L."/>
            <person name="Nelson D.R."/>
            <person name="Nelson K.A."/>
            <person name="Nixon K."/>
            <person name="Nusskern D.R."/>
            <person name="Pacleb J.M."/>
            <person name="Palazzolo M."/>
            <person name="Pittman G.S."/>
            <person name="Pan S."/>
            <person name="Pollard J."/>
            <person name="Puri V."/>
            <person name="Reese M.G."/>
            <person name="Reinert K."/>
            <person name="Remington K."/>
            <person name="Saunders R.D.C."/>
            <person name="Scheeler F."/>
            <person name="Shen H."/>
            <person name="Shue B.C."/>
            <person name="Siden-Kiamos I."/>
            <person name="Simpson M."/>
            <person name="Skupski M.P."/>
            <person name="Smith T.J."/>
            <person name="Spier E."/>
            <person name="Spradling A.C."/>
            <person name="Stapleton M."/>
            <person name="Strong R."/>
            <person name="Sun E."/>
            <person name="Svirskas R."/>
            <person name="Tector C."/>
            <person name="Turner R."/>
            <person name="Venter E."/>
            <person name="Wang A.H."/>
            <person name="Wang X."/>
            <person name="Wang Z.-Y."/>
            <person name="Wassarman D.A."/>
            <person name="Weinstock G.M."/>
            <person name="Weissenbach J."/>
            <person name="Williams S.M."/>
            <person name="Woodage T."/>
            <person name="Worley K.C."/>
            <person name="Wu D."/>
            <person name="Yang S."/>
            <person name="Yao Q.A."/>
            <person name="Ye J."/>
            <person name="Yeh R.-F."/>
            <person name="Zaveri J.S."/>
            <person name="Zhan M."/>
            <person name="Zhang G."/>
            <person name="Zhao Q."/>
            <person name="Zheng L."/>
            <person name="Zheng X.H."/>
            <person name="Zhong F.N."/>
            <person name="Zhong W."/>
            <person name="Zhou X."/>
            <person name="Zhu S.C."/>
            <person name="Zhu X."/>
            <person name="Smith H.O."/>
            <person name="Gibbs R.A."/>
            <person name="Myers E.W."/>
            <person name="Rubin G.M."/>
            <person name="Venter J.C."/>
        </authorList>
    </citation>
    <scope>NUCLEOTIDE SEQUENCE [LARGE SCALE GENOMIC DNA]</scope>
    <source>
        <strain>Berkeley</strain>
    </source>
</reference>
<reference key="3">
    <citation type="journal article" date="2002" name="Genome Biol.">
        <title>Annotation of the Drosophila melanogaster euchromatic genome: a systematic review.</title>
        <authorList>
            <person name="Misra S."/>
            <person name="Crosby M.A."/>
            <person name="Mungall C.J."/>
            <person name="Matthews B.B."/>
            <person name="Campbell K.S."/>
            <person name="Hradecky P."/>
            <person name="Huang Y."/>
            <person name="Kaminker J.S."/>
            <person name="Millburn G.H."/>
            <person name="Prochnik S.E."/>
            <person name="Smith C.D."/>
            <person name="Tupy J.L."/>
            <person name="Whitfield E.J."/>
            <person name="Bayraktaroglu L."/>
            <person name="Berman B.P."/>
            <person name="Bettencourt B.R."/>
            <person name="Celniker S.E."/>
            <person name="de Grey A.D.N.J."/>
            <person name="Drysdale R.A."/>
            <person name="Harris N.L."/>
            <person name="Richter J."/>
            <person name="Russo S."/>
            <person name="Schroeder A.J."/>
            <person name="Shu S.Q."/>
            <person name="Stapleton M."/>
            <person name="Yamada C."/>
            <person name="Ashburner M."/>
            <person name="Gelbart W.M."/>
            <person name="Rubin G.M."/>
            <person name="Lewis S.E."/>
        </authorList>
    </citation>
    <scope>GENOME REANNOTATION</scope>
    <scope>ALTERNATIVE SPLICING</scope>
    <source>
        <strain>Berkeley</strain>
    </source>
</reference>
<reference key="4">
    <citation type="journal article" date="2002" name="Genome Biol.">
        <title>A Drosophila full-length cDNA resource.</title>
        <authorList>
            <person name="Stapleton M."/>
            <person name="Carlson J.W."/>
            <person name="Brokstein P."/>
            <person name="Yu C."/>
            <person name="Champe M."/>
            <person name="George R.A."/>
            <person name="Guarin H."/>
            <person name="Kronmiller B."/>
            <person name="Pacleb J.M."/>
            <person name="Park S."/>
            <person name="Wan K.H."/>
            <person name="Rubin G.M."/>
            <person name="Celniker S.E."/>
        </authorList>
    </citation>
    <scope>NUCLEOTIDE SEQUENCE [LARGE SCALE MRNA] (ISOFORM A)</scope>
    <source>
        <strain>Berkeley</strain>
        <tissue>Embryo</tissue>
    </source>
</reference>
<reference key="5">
    <citation type="submission" date="2009-03" db="EMBL/GenBank/DDBJ databases">
        <authorList>
            <person name="Stapleton M."/>
            <person name="Carlson J.W."/>
            <person name="Booth B."/>
            <person name="Chavez C."/>
            <person name="Frise E."/>
            <person name="George R.A."/>
            <person name="Pacleb J.M."/>
            <person name="Park S."/>
            <person name="Sandler J."/>
            <person name="Wan K.H."/>
            <person name="Yu C."/>
            <person name="Rubin G.M."/>
            <person name="Celniker S.E."/>
        </authorList>
    </citation>
    <scope>NUCLEOTIDE SEQUENCE [LARGE SCALE MRNA] (ISOFORMS A AND B)</scope>
    <source>
        <strain>Berkeley</strain>
        <tissue>Testis</tissue>
    </source>
</reference>
<reference key="6">
    <citation type="journal article" date="2007" name="Mol. Biol. Evol.">
        <title>Adaptive evolution of metabolic pathways in Drosophila.</title>
        <authorList>
            <person name="Flowers J."/>
            <person name="Sezgin E."/>
            <person name="Kumagai S."/>
            <person name="Duvernell D."/>
            <person name="Matzkin L."/>
            <person name="Schmidt P."/>
            <person name="Eanes W."/>
        </authorList>
    </citation>
    <scope>NUCLEOTIDE SEQUENCE [GENOMIC DNA] OF 68-500</scope>
    <scope>VARIANT ALA-380</scope>
    <source>
        <strain>DPF96_10</strain>
        <strain>DPF96_26</strain>
        <strain>DPF96_5.1</strain>
        <strain>DPF96_8.3</strain>
        <strain>HFL97_23</strain>
        <strain>HFL97_3</strain>
        <strain>HFL97_5</strain>
        <strain>HFL97_68</strain>
        <strain>MA96_24.2</strain>
        <strain>MA96_26.4</strain>
        <strain>MA96_3.5</strain>
        <strain>MA96_4.4</strain>
        <strain>MA96_40.1</strain>
        <strain>MA96_42.4</strain>
        <strain>MA96_49.2</strain>
        <strain>SC96_47</strain>
        <strain>VT97_1</strain>
        <strain>Zim(h)_26</strain>
        <strain>Zim(h)_28</strain>
        <strain>Zim(h)_36</strain>
        <strain>Zim(h)_38</strain>
        <strain>Zim(h)_44</strain>
        <strain>Zim(s)_28</strain>
        <strain>Zim(s)_49</strain>
    </source>
</reference>
<reference key="7">
    <citation type="journal article" date="1993" name="Exp. Cell Res.">
        <title>Identification of Drosophila wing imaginal disc proteins by two-dimensional gel analysis and microsequencing.</title>
        <authorList>
            <person name="Santaren J.F."/>
            <person name="van Damme J."/>
            <person name="Puype M."/>
            <person name="Vandekerckhove J."/>
            <person name="Garcia-Bellido A."/>
        </authorList>
    </citation>
    <scope>PROTEIN SEQUENCE OF 100-116</scope>
    <source>
        <strain>Vallecas</strain>
        <tissue>Wing imaginal disk</tissue>
    </source>
</reference>
<reference key="8">
    <citation type="journal article" date="2015" name="Cell Metab.">
        <title>Glial Glycolysis Is Essential for Neuronal Survival in Drosophila.</title>
        <authorList>
            <person name="Volkenhoff A."/>
            <person name="Weiler A."/>
            <person name="Letzel M."/>
            <person name="Stehling M."/>
            <person name="Klaembt C."/>
            <person name="Schirmeier S."/>
        </authorList>
    </citation>
    <scope>FUNCTION</scope>
    <scope>DISRUPTION PHENOTYPE</scope>
</reference>
<protein>
    <recommendedName>
        <fullName evidence="8">Enolase</fullName>
        <ecNumber>4.2.1.11</ecNumber>
    </recommendedName>
    <alternativeName>
        <fullName>2-phospho-D-glycerate hydro-lyase</fullName>
    </alternativeName>
    <alternativeName>
        <fullName>2-phosphoglycerate dehydratase</fullName>
    </alternativeName>
</protein>
<organism evidence="9">
    <name type="scientific">Drosophila melanogaster</name>
    <name type="common">Fruit fly</name>
    <dbReference type="NCBI Taxonomy" id="7227"/>
    <lineage>
        <taxon>Eukaryota</taxon>
        <taxon>Metazoa</taxon>
        <taxon>Ecdysozoa</taxon>
        <taxon>Arthropoda</taxon>
        <taxon>Hexapoda</taxon>
        <taxon>Insecta</taxon>
        <taxon>Pterygota</taxon>
        <taxon>Neoptera</taxon>
        <taxon>Endopterygota</taxon>
        <taxon>Diptera</taxon>
        <taxon>Brachycera</taxon>
        <taxon>Muscomorpha</taxon>
        <taxon>Ephydroidea</taxon>
        <taxon>Drosophilidae</taxon>
        <taxon>Drosophila</taxon>
        <taxon>Sophophora</taxon>
    </lineage>
</organism>
<name>ENO_DROME</name>
<evidence type="ECO:0000250" key="1"/>
<evidence type="ECO:0000269" key="2">
    <source>
    </source>
</evidence>
<evidence type="ECO:0000269" key="3">
    <source>
    </source>
</evidence>
<evidence type="ECO:0000303" key="4">
    <source>
    </source>
</evidence>
<evidence type="ECO:0000303" key="5">
    <source ref="5"/>
</evidence>
<evidence type="ECO:0000305" key="6"/>
<evidence type="ECO:0000305" key="7">
    <source>
    </source>
</evidence>
<evidence type="ECO:0000312" key="8">
    <source>
        <dbReference type="FlyBase" id="FBgn0000579"/>
    </source>
</evidence>
<evidence type="ECO:0000312" key="9">
    <source>
        <dbReference type="Proteomes" id="UP000000803"/>
    </source>
</evidence>
<evidence type="ECO:0007829" key="10">
    <source>
        <dbReference type="PDB" id="5WRO"/>
    </source>
</evidence>
<proteinExistence type="evidence at protein level"/>
<keyword id="KW-0002">3D-structure</keyword>
<keyword id="KW-0025">Alternative splicing</keyword>
<keyword id="KW-0963">Cytoplasm</keyword>
<keyword id="KW-0903">Direct protein sequencing</keyword>
<keyword id="KW-0324">Glycolysis</keyword>
<keyword id="KW-0456">Lyase</keyword>
<keyword id="KW-0460">Magnesium</keyword>
<keyword id="KW-0479">Metal-binding</keyword>
<keyword id="KW-1185">Reference proteome</keyword>
<accession>P15007</accession>
<accession>A4UZY9</accession>
<accession>A5XD39</accession>
<accession>A5XD43</accession>
<accession>B9EQS7</accession>
<accession>C0PV73</accession>
<accession>Q8IPX8</accession>
<accession>Q8MT10</accession>
<accession>Q9VQ38</accession>
<feature type="chain" id="PRO_0000134081" description="Enolase">
    <location>
        <begin position="1"/>
        <end position="500"/>
    </location>
</feature>
<feature type="active site" description="Proton donor" evidence="1">
    <location>
        <position position="277"/>
    </location>
</feature>
<feature type="active site" description="Proton acceptor" evidence="1">
    <location>
        <position position="411"/>
    </location>
</feature>
<feature type="binding site" evidence="1">
    <location>
        <position position="225"/>
    </location>
    <ligand>
        <name>substrate</name>
    </ligand>
</feature>
<feature type="binding site" evidence="1">
    <location>
        <position position="234"/>
    </location>
    <ligand>
        <name>substrate</name>
    </ligand>
</feature>
<feature type="binding site" evidence="1">
    <location>
        <position position="312"/>
    </location>
    <ligand>
        <name>Mg(2+)</name>
        <dbReference type="ChEBI" id="CHEBI:18420"/>
    </ligand>
</feature>
<feature type="binding site" evidence="1">
    <location>
        <position position="361"/>
    </location>
    <ligand>
        <name>Mg(2+)</name>
        <dbReference type="ChEBI" id="CHEBI:18420"/>
    </ligand>
</feature>
<feature type="binding site" evidence="1">
    <location>
        <position position="361"/>
    </location>
    <ligand>
        <name>substrate</name>
    </ligand>
</feature>
<feature type="binding site" evidence="1">
    <location>
        <position position="386"/>
    </location>
    <ligand>
        <name>Mg(2+)</name>
        <dbReference type="ChEBI" id="CHEBI:18420"/>
    </ligand>
</feature>
<feature type="binding site" evidence="1">
    <location>
        <position position="386"/>
    </location>
    <ligand>
        <name>substrate</name>
    </ligand>
</feature>
<feature type="binding site" evidence="1">
    <location>
        <begin position="438"/>
        <end position="441"/>
    </location>
    <ligand>
        <name>substrate</name>
    </ligand>
</feature>
<feature type="binding site" evidence="1">
    <location>
        <position position="462"/>
    </location>
    <ligand>
        <name>substrate</name>
    </ligand>
</feature>
<feature type="splice variant" id="VSP_014147" description="In isoform A." evidence="4 5">
    <location>
        <begin position="1"/>
        <end position="67"/>
    </location>
</feature>
<feature type="sequence variant" description="In strain: SC96_47." evidence="2">
    <original>D</original>
    <variation>A</variation>
    <location>
        <position position="380"/>
    </location>
</feature>
<feature type="sequence conflict" description="In Ref. 4; AAM48478 and 5; AAT47775." evidence="6" ref="4 5">
    <original>K</original>
    <variation>R</variation>
    <location>
        <position position="335"/>
    </location>
</feature>
<feature type="sequence conflict" description="In Ref. 1; CAA34895." evidence="6" ref="1">
    <original>Q</original>
    <variation>K</variation>
    <location>
        <position position="349"/>
    </location>
</feature>
<feature type="sequence conflict" description="In Ref. 1; CAA34895." evidence="6" ref="1">
    <original>R</original>
    <variation>G</variation>
    <location>
        <position position="497"/>
    </location>
</feature>
<feature type="strand" evidence="10">
    <location>
        <begin position="72"/>
        <end position="79"/>
    </location>
</feature>
<feature type="strand" evidence="10">
    <location>
        <begin position="85"/>
        <end position="93"/>
    </location>
</feature>
<feature type="strand" evidence="10">
    <location>
        <begin position="96"/>
        <end position="101"/>
    </location>
</feature>
<feature type="strand" evidence="10">
    <location>
        <begin position="110"/>
        <end position="112"/>
    </location>
</feature>
<feature type="helix" evidence="10">
    <location>
        <begin position="124"/>
        <end position="126"/>
    </location>
</feature>
<feature type="helix" evidence="10">
    <location>
        <begin position="130"/>
        <end position="138"/>
    </location>
</feature>
<feature type="helix" evidence="10">
    <location>
        <begin position="140"/>
        <end position="147"/>
    </location>
</feature>
<feature type="helix" evidence="10">
    <location>
        <begin position="154"/>
        <end position="165"/>
    </location>
</feature>
<feature type="turn" evidence="10">
    <location>
        <begin position="171"/>
        <end position="173"/>
    </location>
</feature>
<feature type="helix" evidence="10">
    <location>
        <begin position="175"/>
        <end position="193"/>
    </location>
</feature>
<feature type="helix" evidence="10">
    <location>
        <begin position="197"/>
        <end position="204"/>
    </location>
</feature>
<feature type="strand" evidence="10">
    <location>
        <begin position="217"/>
        <end position="221"/>
    </location>
</feature>
<feature type="helix" evidence="10">
    <location>
        <begin position="223"/>
        <end position="225"/>
    </location>
</feature>
<feature type="strand" evidence="10">
    <location>
        <begin position="226"/>
        <end position="229"/>
    </location>
</feature>
<feature type="strand" evidence="10">
    <location>
        <begin position="234"/>
        <end position="238"/>
    </location>
</feature>
<feature type="helix" evidence="10">
    <location>
        <begin position="245"/>
        <end position="267"/>
    </location>
</feature>
<feature type="helix" evidence="10">
    <location>
        <begin position="269"/>
        <end position="272"/>
    </location>
</feature>
<feature type="helix" evidence="10">
    <location>
        <begin position="287"/>
        <end position="301"/>
    </location>
</feature>
<feature type="turn" evidence="10">
    <location>
        <begin position="304"/>
        <end position="306"/>
    </location>
</feature>
<feature type="strand" evidence="10">
    <location>
        <begin position="308"/>
        <end position="312"/>
    </location>
</feature>
<feature type="helix" evidence="10">
    <location>
        <begin position="315"/>
        <end position="318"/>
    </location>
</feature>
<feature type="turn" evidence="10">
    <location>
        <begin position="326"/>
        <end position="329"/>
    </location>
</feature>
<feature type="helix" evidence="10">
    <location>
        <begin position="335"/>
        <end position="337"/>
    </location>
</feature>
<feature type="helix" evidence="10">
    <location>
        <begin position="341"/>
        <end position="354"/>
    </location>
</feature>
<feature type="strand" evidence="10">
    <location>
        <begin position="357"/>
        <end position="361"/>
    </location>
</feature>
<feature type="helix" evidence="10">
    <location>
        <begin position="369"/>
        <end position="378"/>
    </location>
</feature>
<feature type="strand" evidence="10">
    <location>
        <begin position="381"/>
        <end position="386"/>
    </location>
</feature>
<feature type="turn" evidence="10">
    <location>
        <begin position="387"/>
        <end position="391"/>
    </location>
</feature>
<feature type="helix" evidence="10">
    <location>
        <begin position="393"/>
        <end position="402"/>
    </location>
</feature>
<feature type="strand" evidence="10">
    <location>
        <begin position="406"/>
        <end position="410"/>
    </location>
</feature>
<feature type="helix" evidence="10">
    <location>
        <begin position="412"/>
        <end position="415"/>
    </location>
</feature>
<feature type="helix" evidence="10">
    <location>
        <begin position="418"/>
        <end position="430"/>
    </location>
</feature>
<feature type="strand" evidence="10">
    <location>
        <begin position="434"/>
        <end position="438"/>
    </location>
</feature>
<feature type="helix" evidence="10">
    <location>
        <begin position="448"/>
        <end position="456"/>
    </location>
</feature>
<feature type="strand" evidence="10">
    <location>
        <begin position="459"/>
        <end position="462"/>
    </location>
</feature>
<feature type="helix" evidence="10">
    <location>
        <begin position="469"/>
        <end position="485"/>
    </location>
</feature>
<feature type="helix" evidence="10">
    <location>
        <begin position="493"/>
        <end position="495"/>
    </location>
</feature>
<comment type="function">
    <text evidence="3 7">Enzyme of the glycolytic pathway (Probable). Glycolysis is essential in glial cells but not in neurons; neurons rely on the citric acid cycle for their energy needs, and on lactate and alanine secreted into the hemolymph by glial cells to fuel it (PubMed:26235423).</text>
</comment>
<comment type="catalytic activity">
    <reaction>
        <text>(2R)-2-phosphoglycerate = phosphoenolpyruvate + H2O</text>
        <dbReference type="Rhea" id="RHEA:10164"/>
        <dbReference type="ChEBI" id="CHEBI:15377"/>
        <dbReference type="ChEBI" id="CHEBI:58289"/>
        <dbReference type="ChEBI" id="CHEBI:58702"/>
        <dbReference type="EC" id="4.2.1.11"/>
    </reaction>
</comment>
<comment type="cofactor">
    <cofactor>
        <name>Mg(2+)</name>
        <dbReference type="ChEBI" id="CHEBI:18420"/>
    </cofactor>
    <text>Mg(2+) is required for catalysis and for stabilizing the dimer.</text>
</comment>
<comment type="pathway">
    <text>Carbohydrate degradation; glycolysis; pyruvate from D-glyceraldehyde 3-phosphate: step 4/5.</text>
</comment>
<comment type="subunit">
    <text>Homodimer.</text>
</comment>
<comment type="subcellular location">
    <subcellularLocation>
        <location>Cytoplasm</location>
    </subcellularLocation>
</comment>
<comment type="alternative products">
    <event type="alternative splicing"/>
    <isoform>
        <id>P15007-1</id>
        <name>B</name>
        <name>C</name>
        <name>D</name>
        <name>E</name>
        <sequence type="displayed"/>
    </isoform>
    <isoform>
        <id>P15007-2</id>
        <name>A</name>
        <sequence type="described" ref="VSP_014147"/>
    </isoform>
</comment>
<comment type="disruption phenotype">
    <text evidence="3">RNAi-mediated knockdown is lethal (PubMed:26235423). Glial-specific RNAi-mediated knockdown is viable but eclosed adults present with locomotor defects (PubMed:26235423). Neuronal-specific RNAi-mediated knockdown is viable with no defects (PubMed:26235423).</text>
</comment>
<comment type="similarity">
    <text evidence="6">Belongs to the enolase family.</text>
</comment>